<feature type="chain" id="PRO_0000212460" description="Protein abhd-3.2" evidence="3">
    <location>
        <begin position="1"/>
        <end position="375"/>
    </location>
</feature>
<feature type="domain" description="AB hydrolase-1" evidence="2">
    <location>
        <begin position="108"/>
        <end position="203"/>
    </location>
</feature>
<feature type="active site" description="Charge relay system" evidence="1">
    <location>
        <position position="189"/>
    </location>
</feature>
<feature type="active site" description="Charge relay system" evidence="1">
    <location>
        <position position="315"/>
    </location>
</feature>
<feature type="active site" description="Charge relay system" evidence="1">
    <location>
        <position position="344"/>
    </location>
</feature>
<evidence type="ECO:0000250" key="1"/>
<evidence type="ECO:0000255" key="2"/>
<evidence type="ECO:0000305" key="3"/>
<evidence type="ECO:0000312" key="4">
    <source>
        <dbReference type="WormBase" id="C44C1.5a"/>
    </source>
</evidence>
<accession>Q18610</accession>
<gene>
    <name evidence="4" type="primary">abhd-3.2</name>
    <name evidence="4" type="ORF">C44C1.5</name>
</gene>
<dbReference type="EC" id="3.1.1.-"/>
<dbReference type="EMBL" id="FO080474">
    <property type="protein sequence ID" value="CCD63974.1"/>
    <property type="molecule type" value="Genomic_DNA"/>
</dbReference>
<dbReference type="PIR" id="T29568">
    <property type="entry name" value="T29568"/>
</dbReference>
<dbReference type="RefSeq" id="NP_001024458.1">
    <property type="nucleotide sequence ID" value="NM_001029287.7"/>
</dbReference>
<dbReference type="BioGRID" id="45403">
    <property type="interactions" value="1"/>
</dbReference>
<dbReference type="FunCoup" id="Q18610">
    <property type="interactions" value="2042"/>
</dbReference>
<dbReference type="IntAct" id="Q18610">
    <property type="interactions" value="1"/>
</dbReference>
<dbReference type="STRING" id="6239.C44C1.5a.2"/>
<dbReference type="ESTHER" id="caeel-yyc5">
    <property type="family name" value="abh_upf0017"/>
</dbReference>
<dbReference type="PaxDb" id="6239-C44C1.5a.1"/>
<dbReference type="PeptideAtlas" id="Q18610"/>
<dbReference type="EnsemblMetazoa" id="C44C1.5a.1">
    <property type="protein sequence ID" value="C44C1.5a.1"/>
    <property type="gene ID" value="WBGene00016644"/>
</dbReference>
<dbReference type="GeneID" id="180450"/>
<dbReference type="KEGG" id="cel:CELE_C44C1.5"/>
<dbReference type="UCSC" id="C44C1.5a">
    <property type="organism name" value="c. elegans"/>
</dbReference>
<dbReference type="AGR" id="WB:WBGene00016644"/>
<dbReference type="CTD" id="180450"/>
<dbReference type="WormBase" id="C44C1.5a">
    <property type="protein sequence ID" value="CE04215"/>
    <property type="gene ID" value="WBGene00016644"/>
    <property type="gene designation" value="abhd-3.2"/>
</dbReference>
<dbReference type="eggNOG" id="KOG1838">
    <property type="taxonomic scope" value="Eukaryota"/>
</dbReference>
<dbReference type="GeneTree" id="ENSGT00950000182902"/>
<dbReference type="HOGENOM" id="CLU_032487_4_0_1"/>
<dbReference type="InParanoid" id="Q18610"/>
<dbReference type="OMA" id="SIECFIP"/>
<dbReference type="OrthoDB" id="247542at2759"/>
<dbReference type="PhylomeDB" id="Q18610"/>
<dbReference type="Reactome" id="R-CEL-1483191">
    <property type="pathway name" value="Synthesis of PC"/>
</dbReference>
<dbReference type="PRO" id="PR:Q18610"/>
<dbReference type="Proteomes" id="UP000001940">
    <property type="component" value="Chromosome X"/>
</dbReference>
<dbReference type="Bgee" id="WBGene00016644">
    <property type="expression patterns" value="Expressed in adult organism and 1 other cell type or tissue"/>
</dbReference>
<dbReference type="ExpressionAtlas" id="Q18610">
    <property type="expression patterns" value="baseline and differential"/>
</dbReference>
<dbReference type="GO" id="GO:0008126">
    <property type="term" value="F:acetylesterase activity"/>
    <property type="evidence" value="ECO:0000318"/>
    <property type="project" value="GO_Central"/>
</dbReference>
<dbReference type="GO" id="GO:0047372">
    <property type="term" value="F:monoacylglycerol lipase activity"/>
    <property type="evidence" value="ECO:0000318"/>
    <property type="project" value="GO_Central"/>
</dbReference>
<dbReference type="GO" id="GO:0051792">
    <property type="term" value="P:medium-chain fatty acid biosynthetic process"/>
    <property type="evidence" value="ECO:0000318"/>
    <property type="project" value="GO_Central"/>
</dbReference>
<dbReference type="GO" id="GO:0051793">
    <property type="term" value="P:medium-chain fatty acid catabolic process"/>
    <property type="evidence" value="ECO:0000318"/>
    <property type="project" value="GO_Central"/>
</dbReference>
<dbReference type="Gene3D" id="3.40.50.1820">
    <property type="entry name" value="alpha/beta hydrolase"/>
    <property type="match status" value="1"/>
</dbReference>
<dbReference type="InterPro" id="IPR000073">
    <property type="entry name" value="AB_hydrolase_1"/>
</dbReference>
<dbReference type="InterPro" id="IPR000952">
    <property type="entry name" value="AB_hydrolase_4_CS"/>
</dbReference>
<dbReference type="InterPro" id="IPR050960">
    <property type="entry name" value="AB_hydrolase_4_sf"/>
</dbReference>
<dbReference type="InterPro" id="IPR029058">
    <property type="entry name" value="AB_hydrolase_fold"/>
</dbReference>
<dbReference type="InterPro" id="IPR012020">
    <property type="entry name" value="ABHD4"/>
</dbReference>
<dbReference type="PANTHER" id="PTHR10794">
    <property type="entry name" value="ABHYDROLASE DOMAIN-CONTAINING PROTEIN"/>
    <property type="match status" value="1"/>
</dbReference>
<dbReference type="PANTHER" id="PTHR10794:SF63">
    <property type="entry name" value="ALPHA_BETA HYDROLASE 1, ISOFORM A"/>
    <property type="match status" value="1"/>
</dbReference>
<dbReference type="Pfam" id="PF00561">
    <property type="entry name" value="Abhydrolase_1"/>
    <property type="match status" value="1"/>
</dbReference>
<dbReference type="PIRSF" id="PIRSF005211">
    <property type="entry name" value="Ab_hydro_YheT"/>
    <property type="match status" value="1"/>
</dbReference>
<dbReference type="SUPFAM" id="SSF53474">
    <property type="entry name" value="alpha/beta-Hydrolases"/>
    <property type="match status" value="1"/>
</dbReference>
<dbReference type="PROSITE" id="PS01133">
    <property type="entry name" value="UPF0017"/>
    <property type="match status" value="1"/>
</dbReference>
<name>ABDH3_CAEEL</name>
<reference key="1">
    <citation type="journal article" date="1998" name="Science">
        <title>Genome sequence of the nematode C. elegans: a platform for investigating biology.</title>
        <authorList>
            <consortium name="The C. elegans sequencing consortium"/>
        </authorList>
    </citation>
    <scope>NUCLEOTIDE SEQUENCE [LARGE SCALE GENOMIC DNA]</scope>
    <source>
        <strain>Bristol N2</strain>
    </source>
</reference>
<organism>
    <name type="scientific">Caenorhabditis elegans</name>
    <dbReference type="NCBI Taxonomy" id="6239"/>
    <lineage>
        <taxon>Eukaryota</taxon>
        <taxon>Metazoa</taxon>
        <taxon>Ecdysozoa</taxon>
        <taxon>Nematoda</taxon>
        <taxon>Chromadorea</taxon>
        <taxon>Rhabditida</taxon>
        <taxon>Rhabditina</taxon>
        <taxon>Rhabditomorpha</taxon>
        <taxon>Rhabditoidea</taxon>
        <taxon>Rhabditidae</taxon>
        <taxon>Peloderinae</taxon>
        <taxon>Caenorhabditis</taxon>
    </lineage>
</organism>
<protein>
    <recommendedName>
        <fullName evidence="3">Protein abhd-3.2</fullName>
        <ecNumber>3.1.1.-</ecNumber>
    </recommendedName>
</protein>
<sequence length="375" mass="42337">MVLPLILTLVIVAPIFLWMYSWYISAIPKHYVKPGTKLQKKVHSNLRILEQKYHPSWWCPFGTTQTVVRQIFRDCPSLPFTREIVEFDDGGAAGIDWLIPEGADDTTPIVVFLPGITGSTHDSSYVLHPVKEARDKGWKCVVVNPRGLGGVKLRTTRTYNAATPHDFAFIAKMINERYPDAKKLGCGFSMGGMILWNYLAMTGENADLDGGMIVSSPWDPLVASDSIECFIPQLIFNSFIAKNLVDMVRPYRELFKDMVDFDEVCRCNTVRGFDRSFVIPMYGFKSCDDYYRQATLATKVDKIKIPCVTLNSVDDYFSPVECIPTLDIMESDYVCGIITNHGGHTAFMESADPNARGMVEKLLSQWGNMIFHDYS</sequence>
<proteinExistence type="inferred from homology"/>
<keyword id="KW-0378">Hydrolase</keyword>
<keyword id="KW-1185">Reference proteome</keyword>
<keyword id="KW-0719">Serine esterase</keyword>
<comment type="similarity">
    <text evidence="3">Belongs to the AB hydrolase superfamily. AB hydrolase 4 family.</text>
</comment>